<protein>
    <recommendedName>
        <fullName evidence="1">Pyridoxine 5'-phosphate synthase</fullName>
        <shortName evidence="1">PNP synthase</shortName>
        <ecNumber evidence="1">2.6.99.2</ecNumber>
    </recommendedName>
</protein>
<sequence>MASLGVNIDHIANVRQARLASEPEPVQMAFLAELGGADGITVHLREDRRHIQDKDLKLLRATINTRLNLEMAATKEMVEIALQVKPDMVTIVPESREEITTEGGLEVVNNKEKLREIINNLHSAKIQTSIFIDPIEAQIKASKEIGAGWVEIHTGCYANASWEKQEIELAKIKASCAQARSMGLHVNAGHGLTYLNVEPIAAIEGIEELNIGHTIVARALAVGLQNAVKEMKSLVTNPRRNNF</sequence>
<dbReference type="EC" id="2.6.99.2" evidence="1"/>
<dbReference type="EMBL" id="CP000878">
    <property type="protein sequence ID" value="ABX09011.1"/>
    <property type="molecule type" value="Genomic_DNA"/>
</dbReference>
<dbReference type="RefSeq" id="WP_012195632.1">
    <property type="nucleotide sequence ID" value="NC_009976.1"/>
</dbReference>
<dbReference type="SMR" id="A9BAZ9"/>
<dbReference type="STRING" id="93059.P9211_10801"/>
<dbReference type="KEGG" id="pmj:P9211_10801"/>
<dbReference type="eggNOG" id="COG0854">
    <property type="taxonomic scope" value="Bacteria"/>
</dbReference>
<dbReference type="HOGENOM" id="CLU_074563_0_0_3"/>
<dbReference type="OrthoDB" id="9806590at2"/>
<dbReference type="UniPathway" id="UPA00244">
    <property type="reaction ID" value="UER00313"/>
</dbReference>
<dbReference type="Proteomes" id="UP000000788">
    <property type="component" value="Chromosome"/>
</dbReference>
<dbReference type="GO" id="GO:0005829">
    <property type="term" value="C:cytosol"/>
    <property type="evidence" value="ECO:0007669"/>
    <property type="project" value="TreeGrafter"/>
</dbReference>
<dbReference type="GO" id="GO:0033856">
    <property type="term" value="F:pyridoxine 5'-phosphate synthase activity"/>
    <property type="evidence" value="ECO:0007669"/>
    <property type="project" value="UniProtKB-EC"/>
</dbReference>
<dbReference type="GO" id="GO:0008615">
    <property type="term" value="P:pyridoxine biosynthetic process"/>
    <property type="evidence" value="ECO:0007669"/>
    <property type="project" value="UniProtKB-UniRule"/>
</dbReference>
<dbReference type="CDD" id="cd00003">
    <property type="entry name" value="PNPsynthase"/>
    <property type="match status" value="1"/>
</dbReference>
<dbReference type="Gene3D" id="3.20.20.70">
    <property type="entry name" value="Aldolase class I"/>
    <property type="match status" value="1"/>
</dbReference>
<dbReference type="HAMAP" id="MF_00279">
    <property type="entry name" value="PdxJ"/>
    <property type="match status" value="1"/>
</dbReference>
<dbReference type="InterPro" id="IPR013785">
    <property type="entry name" value="Aldolase_TIM"/>
</dbReference>
<dbReference type="InterPro" id="IPR004569">
    <property type="entry name" value="PyrdxlP_synth_PdxJ"/>
</dbReference>
<dbReference type="InterPro" id="IPR036130">
    <property type="entry name" value="Pyridoxine-5'_phos_synth"/>
</dbReference>
<dbReference type="NCBIfam" id="TIGR00559">
    <property type="entry name" value="pdxJ"/>
    <property type="match status" value="1"/>
</dbReference>
<dbReference type="NCBIfam" id="NF003625">
    <property type="entry name" value="PRK05265.1-3"/>
    <property type="match status" value="1"/>
</dbReference>
<dbReference type="NCBIfam" id="NF003627">
    <property type="entry name" value="PRK05265.1-5"/>
    <property type="match status" value="1"/>
</dbReference>
<dbReference type="PANTHER" id="PTHR30456">
    <property type="entry name" value="PYRIDOXINE 5'-PHOSPHATE SYNTHASE"/>
    <property type="match status" value="1"/>
</dbReference>
<dbReference type="PANTHER" id="PTHR30456:SF0">
    <property type="entry name" value="PYRIDOXINE 5'-PHOSPHATE SYNTHASE"/>
    <property type="match status" value="1"/>
</dbReference>
<dbReference type="Pfam" id="PF03740">
    <property type="entry name" value="PdxJ"/>
    <property type="match status" value="1"/>
</dbReference>
<dbReference type="SUPFAM" id="SSF63892">
    <property type="entry name" value="Pyridoxine 5'-phosphate synthase"/>
    <property type="match status" value="1"/>
</dbReference>
<gene>
    <name evidence="1" type="primary">pdxJ</name>
    <name type="ordered locus">P9211_10801</name>
</gene>
<name>PDXJ_PROM4</name>
<accession>A9BAZ9</accession>
<organism>
    <name type="scientific">Prochlorococcus marinus (strain MIT 9211)</name>
    <dbReference type="NCBI Taxonomy" id="93059"/>
    <lineage>
        <taxon>Bacteria</taxon>
        <taxon>Bacillati</taxon>
        <taxon>Cyanobacteriota</taxon>
        <taxon>Cyanophyceae</taxon>
        <taxon>Synechococcales</taxon>
        <taxon>Prochlorococcaceae</taxon>
        <taxon>Prochlorococcus</taxon>
    </lineage>
</organism>
<feature type="chain" id="PRO_1000114822" description="Pyridoxine 5'-phosphate synthase">
    <location>
        <begin position="1"/>
        <end position="243"/>
    </location>
</feature>
<feature type="active site" description="Proton acceptor" evidence="1">
    <location>
        <position position="43"/>
    </location>
</feature>
<feature type="active site" description="Proton acceptor" evidence="1">
    <location>
        <position position="70"/>
    </location>
</feature>
<feature type="active site" description="Proton donor" evidence="1">
    <location>
        <position position="190"/>
    </location>
</feature>
<feature type="binding site" evidence="1">
    <location>
        <position position="7"/>
    </location>
    <ligand>
        <name>3-amino-2-oxopropyl phosphate</name>
        <dbReference type="ChEBI" id="CHEBI:57279"/>
    </ligand>
</feature>
<feature type="binding site" evidence="1">
    <location>
        <begin position="9"/>
        <end position="10"/>
    </location>
    <ligand>
        <name>1-deoxy-D-xylulose 5-phosphate</name>
        <dbReference type="ChEBI" id="CHEBI:57792"/>
    </ligand>
</feature>
<feature type="binding site" evidence="1">
    <location>
        <position position="18"/>
    </location>
    <ligand>
        <name>3-amino-2-oxopropyl phosphate</name>
        <dbReference type="ChEBI" id="CHEBI:57279"/>
    </ligand>
</feature>
<feature type="binding site" evidence="1">
    <location>
        <position position="45"/>
    </location>
    <ligand>
        <name>1-deoxy-D-xylulose 5-phosphate</name>
        <dbReference type="ChEBI" id="CHEBI:57792"/>
    </ligand>
</feature>
<feature type="binding site" evidence="1">
    <location>
        <position position="50"/>
    </location>
    <ligand>
        <name>1-deoxy-D-xylulose 5-phosphate</name>
        <dbReference type="ChEBI" id="CHEBI:57792"/>
    </ligand>
</feature>
<feature type="binding site" evidence="1">
    <location>
        <position position="100"/>
    </location>
    <ligand>
        <name>1-deoxy-D-xylulose 5-phosphate</name>
        <dbReference type="ChEBI" id="CHEBI:57792"/>
    </ligand>
</feature>
<feature type="binding site" evidence="1">
    <location>
        <position position="191"/>
    </location>
    <ligand>
        <name>3-amino-2-oxopropyl phosphate</name>
        <dbReference type="ChEBI" id="CHEBI:57279"/>
    </ligand>
</feature>
<feature type="binding site" evidence="1">
    <location>
        <begin position="212"/>
        <end position="213"/>
    </location>
    <ligand>
        <name>3-amino-2-oxopropyl phosphate</name>
        <dbReference type="ChEBI" id="CHEBI:57279"/>
    </ligand>
</feature>
<feature type="site" description="Transition state stabilizer" evidence="1">
    <location>
        <position position="151"/>
    </location>
</feature>
<comment type="function">
    <text evidence="1">Catalyzes the complicated ring closure reaction between the two acyclic compounds 1-deoxy-D-xylulose-5-phosphate (DXP) and 3-amino-2-oxopropyl phosphate (1-amino-acetone-3-phosphate or AAP) to form pyridoxine 5'-phosphate (PNP) and inorganic phosphate.</text>
</comment>
<comment type="catalytic activity">
    <reaction evidence="1">
        <text>3-amino-2-oxopropyl phosphate + 1-deoxy-D-xylulose 5-phosphate = pyridoxine 5'-phosphate + phosphate + 2 H2O + H(+)</text>
        <dbReference type="Rhea" id="RHEA:15265"/>
        <dbReference type="ChEBI" id="CHEBI:15377"/>
        <dbReference type="ChEBI" id="CHEBI:15378"/>
        <dbReference type="ChEBI" id="CHEBI:43474"/>
        <dbReference type="ChEBI" id="CHEBI:57279"/>
        <dbReference type="ChEBI" id="CHEBI:57792"/>
        <dbReference type="ChEBI" id="CHEBI:58589"/>
        <dbReference type="EC" id="2.6.99.2"/>
    </reaction>
</comment>
<comment type="pathway">
    <text evidence="1">Cofactor biosynthesis; pyridoxine 5'-phosphate biosynthesis; pyridoxine 5'-phosphate from D-erythrose 4-phosphate: step 5/5.</text>
</comment>
<comment type="subunit">
    <text evidence="1">Homooctamer; tetramer of dimers.</text>
</comment>
<comment type="subcellular location">
    <subcellularLocation>
        <location evidence="1">Cytoplasm</location>
    </subcellularLocation>
</comment>
<comment type="similarity">
    <text evidence="1">Belongs to the PNP synthase family.</text>
</comment>
<keyword id="KW-0963">Cytoplasm</keyword>
<keyword id="KW-0664">Pyridoxine biosynthesis</keyword>
<keyword id="KW-1185">Reference proteome</keyword>
<keyword id="KW-0808">Transferase</keyword>
<proteinExistence type="inferred from homology"/>
<reference key="1">
    <citation type="journal article" date="2007" name="PLoS Genet.">
        <title>Patterns and implications of gene gain and loss in the evolution of Prochlorococcus.</title>
        <authorList>
            <person name="Kettler G.C."/>
            <person name="Martiny A.C."/>
            <person name="Huang K."/>
            <person name="Zucker J."/>
            <person name="Coleman M.L."/>
            <person name="Rodrigue S."/>
            <person name="Chen F."/>
            <person name="Lapidus A."/>
            <person name="Ferriera S."/>
            <person name="Johnson J."/>
            <person name="Steglich C."/>
            <person name="Church G.M."/>
            <person name="Richardson P."/>
            <person name="Chisholm S.W."/>
        </authorList>
    </citation>
    <scope>NUCLEOTIDE SEQUENCE [LARGE SCALE GENOMIC DNA]</scope>
    <source>
        <strain>MIT 9211</strain>
    </source>
</reference>
<evidence type="ECO:0000255" key="1">
    <source>
        <dbReference type="HAMAP-Rule" id="MF_00279"/>
    </source>
</evidence>